<keyword id="KW-0276">Fatty acid metabolism</keyword>
<keyword id="KW-0436">Ligase</keyword>
<keyword id="KW-0443">Lipid metabolism</keyword>
<accession>Q7A1Q0</accession>
<name>VRAA_STAAW</name>
<reference key="1">
    <citation type="journal article" date="2002" name="Lancet">
        <title>Genome and virulence determinants of high virulence community-acquired MRSA.</title>
        <authorList>
            <person name="Baba T."/>
            <person name="Takeuchi F."/>
            <person name="Kuroda M."/>
            <person name="Yuzawa H."/>
            <person name="Aoki K."/>
            <person name="Oguchi A."/>
            <person name="Nagai Y."/>
            <person name="Iwama N."/>
            <person name="Asano K."/>
            <person name="Naimi T."/>
            <person name="Kuroda H."/>
            <person name="Cui L."/>
            <person name="Yamamoto K."/>
            <person name="Hiramatsu K."/>
        </authorList>
    </citation>
    <scope>NUCLEOTIDE SEQUENCE [LARGE SCALE GENOMIC DNA]</scope>
    <source>
        <strain>MW2</strain>
    </source>
</reference>
<sequence length="458" mass="52024">MNVILEQLKTHTQNKPNDIALHIDDETITYSQLNARITSAVESLQKYSLNPVVAINMKSPVQSIICYLALHRLHKVPMMMEGKWQSTIHRQLIEKYGIKDVIGDTGLMQNIDSPMFIDSTQLQHYPNLLHIGFTSGTTGLPKAYYRDEDSWLASFEVNEMLMLKNENAIAAPGPLSHSLTLYALLFALSSGRTFIGQTTFHPEKLLNQCHKISSYKVAMFLVPTMIKSLLLVYNNEHTIQSFFSSGDKLHSSIFKKIKNQANDINLIEFFGTSETSFISYNLNQQAPVESVGVLFPNVELKTTNHDHNGIGTICIKSNMMFSGYVSEQCINNDEWFVTNDNGYVKEQYLYLTGRQQDMLIIGGQNIYPAHVERLLTQSSSIDEAIIIGIPNERFGQIGVLLYSGDVTLTHKNVKQFLKKKVKRYEIPSMIHHVEKMYYTASGKIAREKMMSMYLRGEL</sequence>
<feature type="chain" id="PRO_0000193196" description="Putative long chain fatty acid-CoA ligase VraA">
    <location>
        <begin position="1"/>
        <end position="458"/>
    </location>
</feature>
<gene>
    <name type="primary">vraA</name>
    <name type="ordered locus">MW0530</name>
</gene>
<protein>
    <recommendedName>
        <fullName>Putative long chain fatty acid-CoA ligase VraA</fullName>
        <ecNumber>6.2.1.-</ecNumber>
    </recommendedName>
    <alternativeName>
        <fullName>Acyl-CoA synthetase</fullName>
    </alternativeName>
</protein>
<comment type="similarity">
    <text evidence="1">Belongs to the ATP-dependent AMP-binding enzyme family.</text>
</comment>
<proteinExistence type="inferred from homology"/>
<evidence type="ECO:0000305" key="1"/>
<organism>
    <name type="scientific">Staphylococcus aureus (strain MW2)</name>
    <dbReference type="NCBI Taxonomy" id="196620"/>
    <lineage>
        <taxon>Bacteria</taxon>
        <taxon>Bacillati</taxon>
        <taxon>Bacillota</taxon>
        <taxon>Bacilli</taxon>
        <taxon>Bacillales</taxon>
        <taxon>Staphylococcaceae</taxon>
        <taxon>Staphylococcus</taxon>
    </lineage>
</organism>
<dbReference type="EC" id="6.2.1.-"/>
<dbReference type="EMBL" id="BA000033">
    <property type="protein sequence ID" value="BAB94395.1"/>
    <property type="molecule type" value="Genomic_DNA"/>
</dbReference>
<dbReference type="RefSeq" id="WP_001100835.1">
    <property type="nucleotide sequence ID" value="NC_003923.1"/>
</dbReference>
<dbReference type="SMR" id="Q7A1Q0"/>
<dbReference type="KEGG" id="sam:MW0530"/>
<dbReference type="HOGENOM" id="CLU_000022_59_0_9"/>
<dbReference type="GO" id="GO:0031956">
    <property type="term" value="F:medium-chain fatty acid-CoA ligase activity"/>
    <property type="evidence" value="ECO:0007669"/>
    <property type="project" value="TreeGrafter"/>
</dbReference>
<dbReference type="GO" id="GO:0006631">
    <property type="term" value="P:fatty acid metabolic process"/>
    <property type="evidence" value="ECO:0007669"/>
    <property type="project" value="UniProtKB-KW"/>
</dbReference>
<dbReference type="CDD" id="cd17633">
    <property type="entry name" value="AFD_YhfT-like"/>
    <property type="match status" value="1"/>
</dbReference>
<dbReference type="Gene3D" id="3.30.300.30">
    <property type="match status" value="1"/>
</dbReference>
<dbReference type="Gene3D" id="3.40.50.12780">
    <property type="entry name" value="N-terminal domain of ligase-like"/>
    <property type="match status" value="1"/>
</dbReference>
<dbReference type="InterPro" id="IPR025110">
    <property type="entry name" value="AMP-bd_C"/>
</dbReference>
<dbReference type="InterPro" id="IPR045851">
    <property type="entry name" value="AMP-bd_C_sf"/>
</dbReference>
<dbReference type="InterPro" id="IPR020845">
    <property type="entry name" value="AMP-binding_CS"/>
</dbReference>
<dbReference type="InterPro" id="IPR000873">
    <property type="entry name" value="AMP-dep_synth/lig_dom"/>
</dbReference>
<dbReference type="InterPro" id="IPR042099">
    <property type="entry name" value="ANL_N_sf"/>
</dbReference>
<dbReference type="PANTHER" id="PTHR43201">
    <property type="entry name" value="ACYL-COA SYNTHETASE"/>
    <property type="match status" value="1"/>
</dbReference>
<dbReference type="PANTHER" id="PTHR43201:SF5">
    <property type="entry name" value="MEDIUM-CHAIN ACYL-COA LIGASE ACSF2, MITOCHONDRIAL"/>
    <property type="match status" value="1"/>
</dbReference>
<dbReference type="Pfam" id="PF00501">
    <property type="entry name" value="AMP-binding"/>
    <property type="match status" value="1"/>
</dbReference>
<dbReference type="Pfam" id="PF13193">
    <property type="entry name" value="AMP-binding_C"/>
    <property type="match status" value="1"/>
</dbReference>
<dbReference type="SUPFAM" id="SSF56801">
    <property type="entry name" value="Acetyl-CoA synthetase-like"/>
    <property type="match status" value="1"/>
</dbReference>
<dbReference type="PROSITE" id="PS00455">
    <property type="entry name" value="AMP_BINDING"/>
    <property type="match status" value="1"/>
</dbReference>